<gene>
    <name type="ordered locus">YPK_1087</name>
</gene>
<comment type="similarity">
    <text evidence="1">Belongs to the UPF0253 family.</text>
</comment>
<name>Y1087_YERPY</name>
<proteinExistence type="inferred from homology"/>
<feature type="chain" id="PRO_1000136550" description="UPF0253 protein YPK_1087">
    <location>
        <begin position="1"/>
        <end position="66"/>
    </location>
</feature>
<organism>
    <name type="scientific">Yersinia pseudotuberculosis serotype O:3 (strain YPIII)</name>
    <dbReference type="NCBI Taxonomy" id="502800"/>
    <lineage>
        <taxon>Bacteria</taxon>
        <taxon>Pseudomonadati</taxon>
        <taxon>Pseudomonadota</taxon>
        <taxon>Gammaproteobacteria</taxon>
        <taxon>Enterobacterales</taxon>
        <taxon>Yersiniaceae</taxon>
        <taxon>Yersinia</taxon>
    </lineage>
</organism>
<evidence type="ECO:0000255" key="1">
    <source>
        <dbReference type="HAMAP-Rule" id="MF_01064"/>
    </source>
</evidence>
<protein>
    <recommendedName>
        <fullName evidence="1">UPF0253 protein YPK_1087</fullName>
    </recommendedName>
</protein>
<accession>B1JQI1</accession>
<dbReference type="EMBL" id="CP000950">
    <property type="protein sequence ID" value="ACA67388.1"/>
    <property type="molecule type" value="Genomic_DNA"/>
</dbReference>
<dbReference type="RefSeq" id="WP_002212152.1">
    <property type="nucleotide sequence ID" value="NZ_CP009792.1"/>
</dbReference>
<dbReference type="SMR" id="B1JQI1"/>
<dbReference type="KEGG" id="ypy:YPK_1087"/>
<dbReference type="PATRIC" id="fig|502800.11.peg.1720"/>
<dbReference type="HAMAP" id="MF_01064">
    <property type="entry name" value="UPF0253"/>
    <property type="match status" value="1"/>
</dbReference>
<dbReference type="InterPro" id="IPR009624">
    <property type="entry name" value="UPF0253"/>
</dbReference>
<dbReference type="NCBIfam" id="NF003436">
    <property type="entry name" value="PRK04964.1"/>
    <property type="match status" value="1"/>
</dbReference>
<dbReference type="Pfam" id="PF06786">
    <property type="entry name" value="UPF0253"/>
    <property type="match status" value="1"/>
</dbReference>
<sequence length="66" mass="7228">MQQYCELVRRFYAEIGSGDLGYVPDALRCVLKALDEVAANDALPSSVREQAAYAAANLLVSDYVDE</sequence>
<reference key="1">
    <citation type="submission" date="2008-02" db="EMBL/GenBank/DDBJ databases">
        <title>Complete sequence of Yersinia pseudotuberculosis YPIII.</title>
        <authorList>
            <consortium name="US DOE Joint Genome Institute"/>
            <person name="Copeland A."/>
            <person name="Lucas S."/>
            <person name="Lapidus A."/>
            <person name="Glavina del Rio T."/>
            <person name="Dalin E."/>
            <person name="Tice H."/>
            <person name="Bruce D."/>
            <person name="Goodwin L."/>
            <person name="Pitluck S."/>
            <person name="Munk A.C."/>
            <person name="Brettin T."/>
            <person name="Detter J.C."/>
            <person name="Han C."/>
            <person name="Tapia R."/>
            <person name="Schmutz J."/>
            <person name="Larimer F."/>
            <person name="Land M."/>
            <person name="Hauser L."/>
            <person name="Challacombe J.F."/>
            <person name="Green L."/>
            <person name="Lindler L.E."/>
            <person name="Nikolich M.P."/>
            <person name="Richardson P."/>
        </authorList>
    </citation>
    <scope>NUCLEOTIDE SEQUENCE [LARGE SCALE GENOMIC DNA]</scope>
    <source>
        <strain>YPIII</strain>
    </source>
</reference>